<proteinExistence type="inferred from homology"/>
<gene>
    <name evidence="1" type="primary">plsX</name>
    <name type="ordered locus">DR_1996</name>
</gene>
<protein>
    <recommendedName>
        <fullName evidence="1">Phosphate acyltransferase</fullName>
        <ecNumber evidence="1">2.3.1.274</ecNumber>
    </recommendedName>
    <alternativeName>
        <fullName evidence="1">Acyl-ACP phosphotransacylase</fullName>
    </alternativeName>
    <alternativeName>
        <fullName evidence="1">Acyl-[acyl-carrier-protein]--phosphate acyltransferase</fullName>
    </alternativeName>
    <alternativeName>
        <fullName evidence="1">Phosphate-acyl-ACP acyltransferase</fullName>
    </alternativeName>
</protein>
<organism>
    <name type="scientific">Deinococcus radiodurans (strain ATCC 13939 / DSM 20539 / JCM 16871 / CCUG 27074 / LMG 4051 / NBRC 15346 / NCIMB 9279 / VKM B-1422 / R1)</name>
    <dbReference type="NCBI Taxonomy" id="243230"/>
    <lineage>
        <taxon>Bacteria</taxon>
        <taxon>Thermotogati</taxon>
        <taxon>Deinococcota</taxon>
        <taxon>Deinococci</taxon>
        <taxon>Deinococcales</taxon>
        <taxon>Deinococcaceae</taxon>
        <taxon>Deinococcus</taxon>
    </lineage>
</organism>
<keyword id="KW-0963">Cytoplasm</keyword>
<keyword id="KW-0444">Lipid biosynthesis</keyword>
<keyword id="KW-0443">Lipid metabolism</keyword>
<keyword id="KW-0594">Phospholipid biosynthesis</keyword>
<keyword id="KW-1208">Phospholipid metabolism</keyword>
<keyword id="KW-1185">Reference proteome</keyword>
<keyword id="KW-0808">Transferase</keyword>
<comment type="function">
    <text evidence="1">Catalyzes the reversible formation of acyl-phosphate (acyl-PO(4)) from acyl-[acyl-carrier-protein] (acyl-ACP). This enzyme utilizes acyl-ACP as fatty acyl donor, but not acyl-CoA.</text>
</comment>
<comment type="catalytic activity">
    <reaction evidence="1">
        <text>a fatty acyl-[ACP] + phosphate = an acyl phosphate + holo-[ACP]</text>
        <dbReference type="Rhea" id="RHEA:42292"/>
        <dbReference type="Rhea" id="RHEA-COMP:9685"/>
        <dbReference type="Rhea" id="RHEA-COMP:14125"/>
        <dbReference type="ChEBI" id="CHEBI:43474"/>
        <dbReference type="ChEBI" id="CHEBI:59918"/>
        <dbReference type="ChEBI" id="CHEBI:64479"/>
        <dbReference type="ChEBI" id="CHEBI:138651"/>
        <dbReference type="EC" id="2.3.1.274"/>
    </reaction>
</comment>
<comment type="pathway">
    <text evidence="1">Lipid metabolism; phospholipid metabolism.</text>
</comment>
<comment type="subunit">
    <text evidence="1">Homodimer. Probably interacts with PlsY.</text>
</comment>
<comment type="subcellular location">
    <subcellularLocation>
        <location evidence="1">Cytoplasm</location>
    </subcellularLocation>
    <text evidence="1">Associated with the membrane possibly through PlsY.</text>
</comment>
<comment type="similarity">
    <text evidence="1">Belongs to the PlsX family.</text>
</comment>
<name>PLSX_DEIRA</name>
<dbReference type="EC" id="2.3.1.274" evidence="1"/>
<dbReference type="EMBL" id="AE000513">
    <property type="status" value="NOT_ANNOTATED_CDS"/>
    <property type="molecule type" value="Genomic_DNA"/>
</dbReference>
<dbReference type="EMBL" id="D63898">
    <property type="protein sequence ID" value="BAA20421.1"/>
    <property type="molecule type" value="Genomic_DNA"/>
</dbReference>
<dbReference type="SMR" id="Q46578"/>
<dbReference type="FunCoup" id="Q46578">
    <property type="interactions" value="275"/>
</dbReference>
<dbReference type="InParanoid" id="Q46578"/>
<dbReference type="UniPathway" id="UPA00085"/>
<dbReference type="Proteomes" id="UP000002524">
    <property type="component" value="Chromosome 1"/>
</dbReference>
<dbReference type="GO" id="GO:0005737">
    <property type="term" value="C:cytoplasm"/>
    <property type="evidence" value="ECO:0007669"/>
    <property type="project" value="UniProtKB-SubCell"/>
</dbReference>
<dbReference type="GO" id="GO:0043811">
    <property type="term" value="F:phosphate:acyl-[acyl carrier protein] acyltransferase activity"/>
    <property type="evidence" value="ECO:0007669"/>
    <property type="project" value="UniProtKB-UniRule"/>
</dbReference>
<dbReference type="GO" id="GO:0006633">
    <property type="term" value="P:fatty acid biosynthetic process"/>
    <property type="evidence" value="ECO:0007669"/>
    <property type="project" value="UniProtKB-UniRule"/>
</dbReference>
<dbReference type="GO" id="GO:0008654">
    <property type="term" value="P:phospholipid biosynthetic process"/>
    <property type="evidence" value="ECO:0007669"/>
    <property type="project" value="UniProtKB-KW"/>
</dbReference>
<dbReference type="Gene3D" id="3.40.718.10">
    <property type="entry name" value="Isopropylmalate Dehydrogenase"/>
    <property type="match status" value="1"/>
</dbReference>
<dbReference type="HAMAP" id="MF_00019">
    <property type="entry name" value="PlsX"/>
    <property type="match status" value="1"/>
</dbReference>
<dbReference type="InterPro" id="IPR003664">
    <property type="entry name" value="FA_synthesis"/>
</dbReference>
<dbReference type="InterPro" id="IPR012281">
    <property type="entry name" value="Phospholipid_synth_PlsX-like"/>
</dbReference>
<dbReference type="NCBIfam" id="TIGR00182">
    <property type="entry name" value="plsX"/>
    <property type="match status" value="1"/>
</dbReference>
<dbReference type="PANTHER" id="PTHR30100">
    <property type="entry name" value="FATTY ACID/PHOSPHOLIPID SYNTHESIS PROTEIN PLSX"/>
    <property type="match status" value="1"/>
</dbReference>
<dbReference type="PANTHER" id="PTHR30100:SF1">
    <property type="entry name" value="PHOSPHATE ACYLTRANSFERASE"/>
    <property type="match status" value="1"/>
</dbReference>
<dbReference type="Pfam" id="PF02504">
    <property type="entry name" value="FA_synthesis"/>
    <property type="match status" value="1"/>
</dbReference>
<dbReference type="PIRSF" id="PIRSF002465">
    <property type="entry name" value="Phsphlp_syn_PlsX"/>
    <property type="match status" value="1"/>
</dbReference>
<dbReference type="SUPFAM" id="SSF53659">
    <property type="entry name" value="Isocitrate/Isopropylmalate dehydrogenase-like"/>
    <property type="match status" value="1"/>
</dbReference>
<accession>Q46578</accession>
<sequence>MSAEASPANLSAKAAGRLPVALDAMGGDHGLTPNVDGAVQAARSGVSVLLVGDRVKLHAELGKHEGSSRLPIEVVDAPDVIGMEEHASDVRSRTGASINVCTRLVKEGRAAAAVSMGHSGATMASALLTLGRIKGVDRPAILAHLPAQGGFTTLLDAGANADVKPAYLAQWARLATVYLKVLEDRDNPTVGLLSIGEEDHKGSQQVVEAHTLLRALDGQGITFYGNVEGRDIFRSTTDIVVTDGFTGNVVLKLAEGEARVLLGWVKEALNSNVKSKLGGLLVRDSLRGLAERMDPSTLRREHLDRGAGAGLYRPRQRRRPRRQKRRAACRPRPRSAAGRAPGSGVRGAAGLRTAEPPGSL</sequence>
<feature type="chain" id="PRO_0000189873" description="Phosphate acyltransferase">
    <location>
        <begin position="1"/>
        <end position="360"/>
    </location>
</feature>
<feature type="region of interest" description="Disordered" evidence="2">
    <location>
        <begin position="296"/>
        <end position="360"/>
    </location>
</feature>
<feature type="compositionally biased region" description="Basic and acidic residues" evidence="2">
    <location>
        <begin position="296"/>
        <end position="305"/>
    </location>
</feature>
<feature type="compositionally biased region" description="Basic residues" evidence="2">
    <location>
        <begin position="314"/>
        <end position="333"/>
    </location>
</feature>
<feature type="compositionally biased region" description="Low complexity" evidence="2">
    <location>
        <begin position="334"/>
        <end position="350"/>
    </location>
</feature>
<feature type="sequence conflict" description="In Ref. 2; BAA20421." evidence="3" ref="2">
    <original>V</original>
    <variation>D</variation>
    <location>
        <position position="114"/>
    </location>
</feature>
<feature type="sequence conflict" description="In Ref. 2; BAA20421." evidence="3" ref="2">
    <original>T</original>
    <variation>N</variation>
    <location>
        <position position="152"/>
    </location>
</feature>
<feature type="sequence conflict" description="In Ref. 2; BAA20421." evidence="3" ref="2">
    <original>PAYLA</original>
    <variation>SRLPR</variation>
    <location>
        <begin position="165"/>
        <end position="169"/>
    </location>
</feature>
<evidence type="ECO:0000255" key="1">
    <source>
        <dbReference type="HAMAP-Rule" id="MF_00019"/>
    </source>
</evidence>
<evidence type="ECO:0000256" key="2">
    <source>
        <dbReference type="SAM" id="MobiDB-lite"/>
    </source>
</evidence>
<evidence type="ECO:0000305" key="3"/>
<reference key="1">
    <citation type="journal article" date="1999" name="Science">
        <title>Genome sequence of the radioresistant bacterium Deinococcus radiodurans R1.</title>
        <authorList>
            <person name="White O."/>
            <person name="Eisen J.A."/>
            <person name="Heidelberg J.F."/>
            <person name="Hickey E.K."/>
            <person name="Peterson J.D."/>
            <person name="Dodson R.J."/>
            <person name="Haft D.H."/>
            <person name="Gwinn M.L."/>
            <person name="Nelson W.C."/>
            <person name="Richardson D.L."/>
            <person name="Moffat K.S."/>
            <person name="Qin H."/>
            <person name="Jiang L."/>
            <person name="Pamphile W."/>
            <person name="Crosby M."/>
            <person name="Shen M."/>
            <person name="Vamathevan J.J."/>
            <person name="Lam P."/>
            <person name="McDonald L.A."/>
            <person name="Utterback T.R."/>
            <person name="Zalewski C."/>
            <person name="Makarova K.S."/>
            <person name="Aravind L."/>
            <person name="Daly M.J."/>
            <person name="Minton K.W."/>
            <person name="Fleischmann R.D."/>
            <person name="Ketchum K.A."/>
            <person name="Nelson K.E."/>
            <person name="Salzberg S.L."/>
            <person name="Smith H.O."/>
            <person name="Venter J.C."/>
            <person name="Fraser C.M."/>
        </authorList>
    </citation>
    <scope>NUCLEOTIDE SEQUENCE [LARGE SCALE GENOMIC DNA]</scope>
    <source>
        <strain>ATCC 13939 / DSM 20539 / JCM 16871 / CCUG 27074 / LMG 4051 / NBRC 15346 / NCIMB 9279 / VKM B-1422 / R1</strain>
    </source>
</reference>
<reference key="2">
    <citation type="submission" date="1995-08" db="EMBL/GenBank/DDBJ databases">
        <title>Molecular cloning and nucleotide sequence of radiation-inducible catalase gene from radioresistant bacterium, Deinococcus radiodurans.</title>
        <authorList>
            <person name="Narumi I."/>
            <person name="Watanabe H."/>
            <person name="Hossain A."/>
            <person name="Tanaka A."/>
            <person name="Kitayama S."/>
        </authorList>
    </citation>
    <scope>NUCLEOTIDE SEQUENCE [GENOMIC DNA] OF 1-169</scope>
    <source>
        <strain>ATCC 13939 / DSM 20539 / JCM 16871 / CCUG 27074 / LMG 4051 / NBRC 15346 / NCIMB 9279 / VKM B-1422 / R1</strain>
    </source>
</reference>